<protein>
    <recommendedName>
        <fullName evidence="1">Chaperone protein DnaJ</fullName>
    </recommendedName>
</protein>
<feature type="chain" id="PRO_1000164275" description="Chaperone protein DnaJ">
    <location>
        <begin position="1"/>
        <end position="379"/>
    </location>
</feature>
<feature type="domain" description="J" evidence="1">
    <location>
        <begin position="4"/>
        <end position="69"/>
    </location>
</feature>
<feature type="repeat" description="CXXCXGXG motif">
    <location>
        <begin position="150"/>
        <end position="157"/>
    </location>
</feature>
<feature type="repeat" description="CXXCXGXG motif">
    <location>
        <begin position="167"/>
        <end position="174"/>
    </location>
</feature>
<feature type="repeat" description="CXXCXGXG motif">
    <location>
        <begin position="189"/>
        <end position="196"/>
    </location>
</feature>
<feature type="repeat" description="CXXCXGXG motif">
    <location>
        <begin position="203"/>
        <end position="210"/>
    </location>
</feature>
<feature type="zinc finger region" description="CR-type" evidence="1">
    <location>
        <begin position="137"/>
        <end position="215"/>
    </location>
</feature>
<feature type="binding site" evidence="1">
    <location>
        <position position="150"/>
    </location>
    <ligand>
        <name>Zn(2+)</name>
        <dbReference type="ChEBI" id="CHEBI:29105"/>
        <label>1</label>
    </ligand>
</feature>
<feature type="binding site" evidence="1">
    <location>
        <position position="153"/>
    </location>
    <ligand>
        <name>Zn(2+)</name>
        <dbReference type="ChEBI" id="CHEBI:29105"/>
        <label>1</label>
    </ligand>
</feature>
<feature type="binding site" evidence="1">
    <location>
        <position position="167"/>
    </location>
    <ligand>
        <name>Zn(2+)</name>
        <dbReference type="ChEBI" id="CHEBI:29105"/>
        <label>2</label>
    </ligand>
</feature>
<feature type="binding site" evidence="1">
    <location>
        <position position="170"/>
    </location>
    <ligand>
        <name>Zn(2+)</name>
        <dbReference type="ChEBI" id="CHEBI:29105"/>
        <label>2</label>
    </ligand>
</feature>
<feature type="binding site" evidence="1">
    <location>
        <position position="189"/>
    </location>
    <ligand>
        <name>Zn(2+)</name>
        <dbReference type="ChEBI" id="CHEBI:29105"/>
        <label>2</label>
    </ligand>
</feature>
<feature type="binding site" evidence="1">
    <location>
        <position position="192"/>
    </location>
    <ligand>
        <name>Zn(2+)</name>
        <dbReference type="ChEBI" id="CHEBI:29105"/>
        <label>2</label>
    </ligand>
</feature>
<feature type="binding site" evidence="1">
    <location>
        <position position="203"/>
    </location>
    <ligand>
        <name>Zn(2+)</name>
        <dbReference type="ChEBI" id="CHEBI:29105"/>
        <label>1</label>
    </ligand>
</feature>
<feature type="binding site" evidence="1">
    <location>
        <position position="206"/>
    </location>
    <ligand>
        <name>Zn(2+)</name>
        <dbReference type="ChEBI" id="CHEBI:29105"/>
        <label>1</label>
    </ligand>
</feature>
<name>DNAJ_SINFN</name>
<dbReference type="EMBL" id="CP001389">
    <property type="protein sequence ID" value="ACP27230.1"/>
    <property type="molecule type" value="Genomic_DNA"/>
</dbReference>
<dbReference type="RefSeq" id="WP_012709975.1">
    <property type="nucleotide sequence ID" value="NC_012587.1"/>
</dbReference>
<dbReference type="RefSeq" id="YP_002827983.1">
    <property type="nucleotide sequence ID" value="NC_012587.1"/>
</dbReference>
<dbReference type="SMR" id="C3MC05"/>
<dbReference type="STRING" id="394.NGR_c35060"/>
<dbReference type="KEGG" id="rhi:NGR_c35060"/>
<dbReference type="PATRIC" id="fig|394.7.peg.6354"/>
<dbReference type="eggNOG" id="COG0484">
    <property type="taxonomic scope" value="Bacteria"/>
</dbReference>
<dbReference type="HOGENOM" id="CLU_017633_0_7_5"/>
<dbReference type="OrthoDB" id="9779889at2"/>
<dbReference type="Proteomes" id="UP000001054">
    <property type="component" value="Chromosome"/>
</dbReference>
<dbReference type="GO" id="GO:0005737">
    <property type="term" value="C:cytoplasm"/>
    <property type="evidence" value="ECO:0007669"/>
    <property type="project" value="UniProtKB-SubCell"/>
</dbReference>
<dbReference type="GO" id="GO:0005524">
    <property type="term" value="F:ATP binding"/>
    <property type="evidence" value="ECO:0007669"/>
    <property type="project" value="InterPro"/>
</dbReference>
<dbReference type="GO" id="GO:0031072">
    <property type="term" value="F:heat shock protein binding"/>
    <property type="evidence" value="ECO:0007669"/>
    <property type="project" value="InterPro"/>
</dbReference>
<dbReference type="GO" id="GO:0051082">
    <property type="term" value="F:unfolded protein binding"/>
    <property type="evidence" value="ECO:0007669"/>
    <property type="project" value="UniProtKB-UniRule"/>
</dbReference>
<dbReference type="GO" id="GO:0008270">
    <property type="term" value="F:zinc ion binding"/>
    <property type="evidence" value="ECO:0007669"/>
    <property type="project" value="UniProtKB-UniRule"/>
</dbReference>
<dbReference type="GO" id="GO:0051085">
    <property type="term" value="P:chaperone cofactor-dependent protein refolding"/>
    <property type="evidence" value="ECO:0007669"/>
    <property type="project" value="TreeGrafter"/>
</dbReference>
<dbReference type="GO" id="GO:0006260">
    <property type="term" value="P:DNA replication"/>
    <property type="evidence" value="ECO:0007669"/>
    <property type="project" value="UniProtKB-KW"/>
</dbReference>
<dbReference type="GO" id="GO:0042026">
    <property type="term" value="P:protein refolding"/>
    <property type="evidence" value="ECO:0007669"/>
    <property type="project" value="TreeGrafter"/>
</dbReference>
<dbReference type="GO" id="GO:0009408">
    <property type="term" value="P:response to heat"/>
    <property type="evidence" value="ECO:0007669"/>
    <property type="project" value="InterPro"/>
</dbReference>
<dbReference type="CDD" id="cd06257">
    <property type="entry name" value="DnaJ"/>
    <property type="match status" value="1"/>
</dbReference>
<dbReference type="CDD" id="cd10747">
    <property type="entry name" value="DnaJ_C"/>
    <property type="match status" value="1"/>
</dbReference>
<dbReference type="CDD" id="cd10719">
    <property type="entry name" value="DnaJ_zf"/>
    <property type="match status" value="1"/>
</dbReference>
<dbReference type="FunFam" id="1.10.287.110:FF:000034">
    <property type="entry name" value="Chaperone protein DnaJ"/>
    <property type="match status" value="1"/>
</dbReference>
<dbReference type="FunFam" id="2.10.230.10:FF:000002">
    <property type="entry name" value="Molecular chaperone DnaJ"/>
    <property type="match status" value="1"/>
</dbReference>
<dbReference type="FunFam" id="2.60.260.20:FF:000004">
    <property type="entry name" value="Molecular chaperone DnaJ"/>
    <property type="match status" value="1"/>
</dbReference>
<dbReference type="Gene3D" id="1.10.287.110">
    <property type="entry name" value="DnaJ domain"/>
    <property type="match status" value="1"/>
</dbReference>
<dbReference type="Gene3D" id="2.10.230.10">
    <property type="entry name" value="Heat shock protein DnaJ, cysteine-rich domain"/>
    <property type="match status" value="1"/>
</dbReference>
<dbReference type="Gene3D" id="2.60.260.20">
    <property type="entry name" value="Urease metallochaperone UreE, N-terminal domain"/>
    <property type="match status" value="2"/>
</dbReference>
<dbReference type="HAMAP" id="MF_01152">
    <property type="entry name" value="DnaJ"/>
    <property type="match status" value="1"/>
</dbReference>
<dbReference type="InterPro" id="IPR012724">
    <property type="entry name" value="DnaJ"/>
</dbReference>
<dbReference type="InterPro" id="IPR002939">
    <property type="entry name" value="DnaJ_C"/>
</dbReference>
<dbReference type="InterPro" id="IPR001623">
    <property type="entry name" value="DnaJ_domain"/>
</dbReference>
<dbReference type="InterPro" id="IPR018253">
    <property type="entry name" value="DnaJ_domain_CS"/>
</dbReference>
<dbReference type="InterPro" id="IPR008971">
    <property type="entry name" value="HSP40/DnaJ_pept-bd"/>
</dbReference>
<dbReference type="InterPro" id="IPR001305">
    <property type="entry name" value="HSP_DnaJ_Cys-rich_dom"/>
</dbReference>
<dbReference type="InterPro" id="IPR036410">
    <property type="entry name" value="HSP_DnaJ_Cys-rich_dom_sf"/>
</dbReference>
<dbReference type="InterPro" id="IPR036869">
    <property type="entry name" value="J_dom_sf"/>
</dbReference>
<dbReference type="NCBIfam" id="TIGR02349">
    <property type="entry name" value="DnaJ_bact"/>
    <property type="match status" value="1"/>
</dbReference>
<dbReference type="NCBIfam" id="NF008035">
    <property type="entry name" value="PRK10767.1"/>
    <property type="match status" value="1"/>
</dbReference>
<dbReference type="PANTHER" id="PTHR43096:SF48">
    <property type="entry name" value="CHAPERONE PROTEIN DNAJ"/>
    <property type="match status" value="1"/>
</dbReference>
<dbReference type="PANTHER" id="PTHR43096">
    <property type="entry name" value="DNAJ HOMOLOG 1, MITOCHONDRIAL-RELATED"/>
    <property type="match status" value="1"/>
</dbReference>
<dbReference type="Pfam" id="PF00226">
    <property type="entry name" value="DnaJ"/>
    <property type="match status" value="1"/>
</dbReference>
<dbReference type="Pfam" id="PF01556">
    <property type="entry name" value="DnaJ_C"/>
    <property type="match status" value="1"/>
</dbReference>
<dbReference type="Pfam" id="PF00684">
    <property type="entry name" value="DnaJ_CXXCXGXG"/>
    <property type="match status" value="1"/>
</dbReference>
<dbReference type="PRINTS" id="PR00625">
    <property type="entry name" value="JDOMAIN"/>
</dbReference>
<dbReference type="SMART" id="SM00271">
    <property type="entry name" value="DnaJ"/>
    <property type="match status" value="1"/>
</dbReference>
<dbReference type="SUPFAM" id="SSF46565">
    <property type="entry name" value="Chaperone J-domain"/>
    <property type="match status" value="1"/>
</dbReference>
<dbReference type="SUPFAM" id="SSF57938">
    <property type="entry name" value="DnaJ/Hsp40 cysteine-rich domain"/>
    <property type="match status" value="1"/>
</dbReference>
<dbReference type="SUPFAM" id="SSF49493">
    <property type="entry name" value="HSP40/DnaJ peptide-binding domain"/>
    <property type="match status" value="2"/>
</dbReference>
<dbReference type="PROSITE" id="PS00636">
    <property type="entry name" value="DNAJ_1"/>
    <property type="match status" value="1"/>
</dbReference>
<dbReference type="PROSITE" id="PS50076">
    <property type="entry name" value="DNAJ_2"/>
    <property type="match status" value="1"/>
</dbReference>
<dbReference type="PROSITE" id="PS51188">
    <property type="entry name" value="ZF_CR"/>
    <property type="match status" value="1"/>
</dbReference>
<accession>C3MC05</accession>
<reference key="1">
    <citation type="journal article" date="2009" name="Appl. Environ. Microbiol.">
        <title>Rhizobium sp. strain NGR234 possesses a remarkable number of secretion systems.</title>
        <authorList>
            <person name="Schmeisser C."/>
            <person name="Liesegang H."/>
            <person name="Krysciak D."/>
            <person name="Bakkou N."/>
            <person name="Le Quere A."/>
            <person name="Wollherr A."/>
            <person name="Heinemeyer I."/>
            <person name="Morgenstern B."/>
            <person name="Pommerening-Roeser A."/>
            <person name="Flores M."/>
            <person name="Palacios R."/>
            <person name="Brenner S."/>
            <person name="Gottschalk G."/>
            <person name="Schmitz R.A."/>
            <person name="Broughton W.J."/>
            <person name="Perret X."/>
            <person name="Strittmatter A.W."/>
            <person name="Streit W.R."/>
        </authorList>
    </citation>
    <scope>NUCLEOTIDE SEQUENCE [LARGE SCALE GENOMIC DNA]</scope>
    <source>
        <strain>NBRC 101917 / NGR234</strain>
    </source>
</reference>
<evidence type="ECO:0000255" key="1">
    <source>
        <dbReference type="HAMAP-Rule" id="MF_01152"/>
    </source>
</evidence>
<sequence length="379" mass="41433">MKRDLYETLGVKKNADEKELKSAFRKLAMKYHPDRNPGDQEAEKSFKEINEAYETLKDPQKRAAYDRYGHAAFEQGGMGAGFGNGFAGGSAGGFSDIFEDIFGEMMGGRQRRSSGGRERGADLRYNMEITLEEAYSGKTAQIRVPTSVTCDVCTGSGAKPGTSPKTCATCQGSGRIRAAQGFFSIERTCPTCGGRGQTITDPCTKCHGQGRVTEERTLSVNIPTGIEDGTRIRLSGEGEAGLRGGPAGDLYIFLSVKPHEFYQRDGADLYCSVPISMTTAALGGKFDVTTLDGTKSRVTVPEGTQAGKQFRLKGKGMPVLRSNQTGDLYIQIQIETPQKLTKRQRELLQEFEQISSKENNPQSTGFFSRMKDFFDTLSE</sequence>
<gene>
    <name evidence="1" type="primary">dnaJ</name>
    <name type="ordered locus">NGR_c35060</name>
</gene>
<comment type="function">
    <text evidence="1">Participates actively in the response to hyperosmotic and heat shock by preventing the aggregation of stress-denatured proteins and by disaggregating proteins, also in an autonomous, DnaK-independent fashion. Unfolded proteins bind initially to DnaJ; upon interaction with the DnaJ-bound protein, DnaK hydrolyzes its bound ATP, resulting in the formation of a stable complex. GrpE releases ADP from DnaK; ATP binding to DnaK triggers the release of the substrate protein, thus completing the reaction cycle. Several rounds of ATP-dependent interactions between DnaJ, DnaK and GrpE are required for fully efficient folding. Also involved, together with DnaK and GrpE, in the DNA replication of plasmids through activation of initiation proteins.</text>
</comment>
<comment type="cofactor">
    <cofactor evidence="1">
        <name>Zn(2+)</name>
        <dbReference type="ChEBI" id="CHEBI:29105"/>
    </cofactor>
    <text evidence="1">Binds 2 Zn(2+) ions per monomer.</text>
</comment>
<comment type="subunit">
    <text evidence="1">Homodimer.</text>
</comment>
<comment type="subcellular location">
    <subcellularLocation>
        <location evidence="1">Cytoplasm</location>
    </subcellularLocation>
</comment>
<comment type="domain">
    <text evidence="1">The J domain is necessary and sufficient to stimulate DnaK ATPase activity. Zinc center 1 plays an important role in the autonomous, DnaK-independent chaperone activity of DnaJ. Zinc center 2 is essential for interaction with DnaK and for DnaJ activity.</text>
</comment>
<comment type="similarity">
    <text evidence="1">Belongs to the DnaJ family.</text>
</comment>
<proteinExistence type="inferred from homology"/>
<keyword id="KW-0143">Chaperone</keyword>
<keyword id="KW-0963">Cytoplasm</keyword>
<keyword id="KW-0235">DNA replication</keyword>
<keyword id="KW-0479">Metal-binding</keyword>
<keyword id="KW-1185">Reference proteome</keyword>
<keyword id="KW-0677">Repeat</keyword>
<keyword id="KW-0346">Stress response</keyword>
<keyword id="KW-0862">Zinc</keyword>
<keyword id="KW-0863">Zinc-finger</keyword>
<organism>
    <name type="scientific">Sinorhizobium fredii (strain NBRC 101917 / NGR234)</name>
    <dbReference type="NCBI Taxonomy" id="394"/>
    <lineage>
        <taxon>Bacteria</taxon>
        <taxon>Pseudomonadati</taxon>
        <taxon>Pseudomonadota</taxon>
        <taxon>Alphaproteobacteria</taxon>
        <taxon>Hyphomicrobiales</taxon>
        <taxon>Rhizobiaceae</taxon>
        <taxon>Sinorhizobium/Ensifer group</taxon>
        <taxon>Sinorhizobium</taxon>
    </lineage>
</organism>